<name>RRAGA_DICDI</name>
<feature type="chain" id="PRO_0000327795" description="Ras-related GTP-binding protein A">
    <location>
        <begin position="1"/>
        <end position="301"/>
    </location>
</feature>
<feature type="binding site" evidence="1">
    <location>
        <begin position="9"/>
        <end position="16"/>
    </location>
    <ligand>
        <name>GTP</name>
        <dbReference type="ChEBI" id="CHEBI:37565"/>
    </ligand>
</feature>
<feature type="binding site" evidence="1">
    <location>
        <begin position="57"/>
        <end position="61"/>
    </location>
    <ligand>
        <name>GTP</name>
        <dbReference type="ChEBI" id="CHEBI:37565"/>
    </ligand>
</feature>
<feature type="binding site" evidence="1">
    <location>
        <begin position="122"/>
        <end position="125"/>
    </location>
    <ligand>
        <name>GTP</name>
        <dbReference type="ChEBI" id="CHEBI:37565"/>
    </ligand>
</feature>
<proteinExistence type="evidence at transcript level"/>
<keyword id="KW-0963">Cytoplasm</keyword>
<keyword id="KW-0342">GTP-binding</keyword>
<keyword id="KW-0458">Lysosome</keyword>
<keyword id="KW-0547">Nucleotide-binding</keyword>
<keyword id="KW-0539">Nucleus</keyword>
<keyword id="KW-1185">Reference proteome</keyword>
<gene>
    <name type="primary">ragA</name>
    <name type="ORF">DDB_G0288701</name>
</gene>
<reference key="1">
    <citation type="journal article" date="2005" name="Nature">
        <title>The genome of the social amoeba Dictyostelium discoideum.</title>
        <authorList>
            <person name="Eichinger L."/>
            <person name="Pachebat J.A."/>
            <person name="Gloeckner G."/>
            <person name="Rajandream M.A."/>
            <person name="Sucgang R."/>
            <person name="Berriman M."/>
            <person name="Song J."/>
            <person name="Olsen R."/>
            <person name="Szafranski K."/>
            <person name="Xu Q."/>
            <person name="Tunggal B."/>
            <person name="Kummerfeld S."/>
            <person name="Madera M."/>
            <person name="Konfortov B.A."/>
            <person name="Rivero F."/>
            <person name="Bankier A.T."/>
            <person name="Lehmann R."/>
            <person name="Hamlin N."/>
            <person name="Davies R."/>
            <person name="Gaudet P."/>
            <person name="Fey P."/>
            <person name="Pilcher K."/>
            <person name="Chen G."/>
            <person name="Saunders D."/>
            <person name="Sodergren E.J."/>
            <person name="Davis P."/>
            <person name="Kerhornou A."/>
            <person name="Nie X."/>
            <person name="Hall N."/>
            <person name="Anjard C."/>
            <person name="Hemphill L."/>
            <person name="Bason N."/>
            <person name="Farbrother P."/>
            <person name="Desany B."/>
            <person name="Just E."/>
            <person name="Morio T."/>
            <person name="Rost R."/>
            <person name="Churcher C.M."/>
            <person name="Cooper J."/>
            <person name="Haydock S."/>
            <person name="van Driessche N."/>
            <person name="Cronin A."/>
            <person name="Goodhead I."/>
            <person name="Muzny D.M."/>
            <person name="Mourier T."/>
            <person name="Pain A."/>
            <person name="Lu M."/>
            <person name="Harper D."/>
            <person name="Lindsay R."/>
            <person name="Hauser H."/>
            <person name="James K.D."/>
            <person name="Quiles M."/>
            <person name="Madan Babu M."/>
            <person name="Saito T."/>
            <person name="Buchrieser C."/>
            <person name="Wardroper A."/>
            <person name="Felder M."/>
            <person name="Thangavelu M."/>
            <person name="Johnson D."/>
            <person name="Knights A."/>
            <person name="Loulseged H."/>
            <person name="Mungall K.L."/>
            <person name="Oliver K."/>
            <person name="Price C."/>
            <person name="Quail M.A."/>
            <person name="Urushihara H."/>
            <person name="Hernandez J."/>
            <person name="Rabbinowitsch E."/>
            <person name="Steffen D."/>
            <person name="Sanders M."/>
            <person name="Ma J."/>
            <person name="Kohara Y."/>
            <person name="Sharp S."/>
            <person name="Simmonds M.N."/>
            <person name="Spiegler S."/>
            <person name="Tivey A."/>
            <person name="Sugano S."/>
            <person name="White B."/>
            <person name="Walker D."/>
            <person name="Woodward J.R."/>
            <person name="Winckler T."/>
            <person name="Tanaka Y."/>
            <person name="Shaulsky G."/>
            <person name="Schleicher M."/>
            <person name="Weinstock G.M."/>
            <person name="Rosenthal A."/>
            <person name="Cox E.C."/>
            <person name="Chisholm R.L."/>
            <person name="Gibbs R.A."/>
            <person name="Loomis W.F."/>
            <person name="Platzer M."/>
            <person name="Kay R.R."/>
            <person name="Williams J.G."/>
            <person name="Dear P.H."/>
            <person name="Noegel A.A."/>
            <person name="Barrell B.G."/>
            <person name="Kuspa A."/>
        </authorList>
    </citation>
    <scope>NUCLEOTIDE SEQUENCE [LARGE SCALE GENOMIC DNA]</scope>
    <source>
        <strain>AX4</strain>
    </source>
</reference>
<organism>
    <name type="scientific">Dictyostelium discoideum</name>
    <name type="common">Social amoeba</name>
    <dbReference type="NCBI Taxonomy" id="44689"/>
    <lineage>
        <taxon>Eukaryota</taxon>
        <taxon>Amoebozoa</taxon>
        <taxon>Evosea</taxon>
        <taxon>Eumycetozoa</taxon>
        <taxon>Dictyostelia</taxon>
        <taxon>Dictyosteliales</taxon>
        <taxon>Dictyosteliaceae</taxon>
        <taxon>Dictyostelium</taxon>
    </lineage>
</organism>
<dbReference type="EMBL" id="AAFI02000120">
    <property type="protein sequence ID" value="EAL63082.1"/>
    <property type="molecule type" value="Genomic_DNA"/>
</dbReference>
<dbReference type="RefSeq" id="XP_636585.1">
    <property type="nucleotide sequence ID" value="XM_631493.1"/>
</dbReference>
<dbReference type="SMR" id="Q54IK1"/>
<dbReference type="FunCoup" id="Q54IK1">
    <property type="interactions" value="215"/>
</dbReference>
<dbReference type="STRING" id="44689.Q54IK1"/>
<dbReference type="PaxDb" id="44689-DDB0230043"/>
<dbReference type="EnsemblProtists" id="EAL63082">
    <property type="protein sequence ID" value="EAL63082"/>
    <property type="gene ID" value="DDB_G0288701"/>
</dbReference>
<dbReference type="GeneID" id="8626758"/>
<dbReference type="KEGG" id="ddi:DDB_G0288701"/>
<dbReference type="dictyBase" id="DDB_G0288701">
    <property type="gene designation" value="ragA"/>
</dbReference>
<dbReference type="VEuPathDB" id="AmoebaDB:DDB_G0288701"/>
<dbReference type="eggNOG" id="KOG3886">
    <property type="taxonomic scope" value="Eukaryota"/>
</dbReference>
<dbReference type="HOGENOM" id="CLU_044099_1_0_1"/>
<dbReference type="InParanoid" id="Q54IK1"/>
<dbReference type="OMA" id="LIPNMQD"/>
<dbReference type="PhylomeDB" id="Q54IK1"/>
<dbReference type="Reactome" id="R-DDI-1632852">
    <property type="pathway name" value="Macroautophagy"/>
</dbReference>
<dbReference type="Reactome" id="R-DDI-165159">
    <property type="pathway name" value="MTOR signalling"/>
</dbReference>
<dbReference type="Reactome" id="R-DDI-166208">
    <property type="pathway name" value="mTORC1-mediated signalling"/>
</dbReference>
<dbReference type="Reactome" id="R-DDI-380972">
    <property type="pathway name" value="Energy dependent regulation of mTOR by LKB1-AMPK"/>
</dbReference>
<dbReference type="Reactome" id="R-DDI-5628897">
    <property type="pathway name" value="TP53 Regulates Metabolic Genes"/>
</dbReference>
<dbReference type="Reactome" id="R-DDI-8866654">
    <property type="pathway name" value="E3 ubiquitin ligases ubiquitinate target proteins"/>
</dbReference>
<dbReference type="Reactome" id="R-DDI-8943724">
    <property type="pathway name" value="Regulation of PTEN gene transcription"/>
</dbReference>
<dbReference type="Reactome" id="R-DDI-9639288">
    <property type="pathway name" value="Amino acids regulate mTORC1"/>
</dbReference>
<dbReference type="PRO" id="PR:Q54IK1"/>
<dbReference type="Proteomes" id="UP000002195">
    <property type="component" value="Chromosome 5"/>
</dbReference>
<dbReference type="GO" id="GO:1990131">
    <property type="term" value="C:Gtr1-Gtr2 GTPase complex"/>
    <property type="evidence" value="ECO:0000318"/>
    <property type="project" value="GO_Central"/>
</dbReference>
<dbReference type="GO" id="GO:0005764">
    <property type="term" value="C:lysosome"/>
    <property type="evidence" value="ECO:0000318"/>
    <property type="project" value="GO_Central"/>
</dbReference>
<dbReference type="GO" id="GO:0005634">
    <property type="term" value="C:nucleus"/>
    <property type="evidence" value="ECO:0000318"/>
    <property type="project" value="GO_Central"/>
</dbReference>
<dbReference type="GO" id="GO:0005525">
    <property type="term" value="F:GTP binding"/>
    <property type="evidence" value="ECO:0000318"/>
    <property type="project" value="GO_Central"/>
</dbReference>
<dbReference type="GO" id="GO:0003924">
    <property type="term" value="F:GTPase activity"/>
    <property type="evidence" value="ECO:0000318"/>
    <property type="project" value="GO_Central"/>
</dbReference>
<dbReference type="GO" id="GO:0009267">
    <property type="term" value="P:cellular response to starvation"/>
    <property type="evidence" value="ECO:0000318"/>
    <property type="project" value="GO_Central"/>
</dbReference>
<dbReference type="GO" id="GO:0010507">
    <property type="term" value="P:negative regulation of autophagy"/>
    <property type="evidence" value="ECO:0000318"/>
    <property type="project" value="GO_Central"/>
</dbReference>
<dbReference type="GO" id="GO:0006817">
    <property type="term" value="P:phosphate ion transport"/>
    <property type="evidence" value="ECO:0000250"/>
    <property type="project" value="dictyBase"/>
</dbReference>
<dbReference type="GO" id="GO:1904263">
    <property type="term" value="P:positive regulation of TORC1 signaling"/>
    <property type="evidence" value="ECO:0000318"/>
    <property type="project" value="GO_Central"/>
</dbReference>
<dbReference type="CDD" id="cd11384">
    <property type="entry name" value="RagA_like"/>
    <property type="match status" value="1"/>
</dbReference>
<dbReference type="FunFam" id="3.40.50.300:FF:003829">
    <property type="entry name" value="Ras-related GTP-binding protein"/>
    <property type="match status" value="1"/>
</dbReference>
<dbReference type="FunFam" id="3.30.450.190:FF:000002">
    <property type="entry name" value="Ras-related GTP-binding protein A"/>
    <property type="match status" value="1"/>
</dbReference>
<dbReference type="Gene3D" id="3.30.450.190">
    <property type="match status" value="1"/>
</dbReference>
<dbReference type="Gene3D" id="3.40.50.300">
    <property type="entry name" value="P-loop containing nucleotide triphosphate hydrolases"/>
    <property type="match status" value="1"/>
</dbReference>
<dbReference type="InterPro" id="IPR006762">
    <property type="entry name" value="Gtr1_RagA"/>
</dbReference>
<dbReference type="InterPro" id="IPR027417">
    <property type="entry name" value="P-loop_NTPase"/>
</dbReference>
<dbReference type="InterPro" id="IPR039397">
    <property type="entry name" value="RagA/B"/>
</dbReference>
<dbReference type="InterPro" id="IPR005225">
    <property type="entry name" value="Small_GTP-bd"/>
</dbReference>
<dbReference type="NCBIfam" id="TIGR00231">
    <property type="entry name" value="small_GTP"/>
    <property type="match status" value="1"/>
</dbReference>
<dbReference type="PANTHER" id="PTHR11259">
    <property type="entry name" value="RAS-RELATED GTP BINDING RAG/GTR YEAST"/>
    <property type="match status" value="1"/>
</dbReference>
<dbReference type="PANTHER" id="PTHR11259:SF1">
    <property type="entry name" value="RAS-RELATED GTP-BINDING PROTEIN"/>
    <property type="match status" value="1"/>
</dbReference>
<dbReference type="Pfam" id="PF04670">
    <property type="entry name" value="Gtr1_RagA"/>
    <property type="match status" value="1"/>
</dbReference>
<dbReference type="SUPFAM" id="SSF52540">
    <property type="entry name" value="P-loop containing nucleoside triphosphate hydrolases"/>
    <property type="match status" value="1"/>
</dbReference>
<evidence type="ECO:0000250" key="1"/>
<evidence type="ECO:0000250" key="2">
    <source>
        <dbReference type="UniProtKB" id="Q7L523"/>
    </source>
</evidence>
<evidence type="ECO:0000305" key="3"/>
<sequence>MKRKVLLMGRSESGKTSMRSIIFANYIARDTMRLGVTIDVEHSHVRFLGNLVLNLWDCGGQEGFLESYLTTQRDHIFRNVEVLIYVFDIESREHQKDIKNYKSCIEAISQNSKDAKIFCLIHKMDLVPEDQRDTLFKNKEQEIRQASLPLKPTCFRTSIWDETLYKAWSSIVYSLIPNVKVLEYNLDKFCKICEADEVVLFEKATFLVISHSARKVHKDVHRFEKISTIIKQFFLSCSKSQANFQAMEVRNSNFAAFIDAFTSNTYIMVIMSDPTIESSATLLNIQVAKSHFEKFINSTSN</sequence>
<comment type="function">
    <text evidence="2">Guanine nucleotide-binding protein that plays a crucial role in the cellular response to amino acid availability through regulation of the TOR signaling cascade.</text>
</comment>
<comment type="subcellular location">
    <subcellularLocation>
        <location evidence="2">Cytoplasm</location>
    </subcellularLocation>
    <subcellularLocation>
        <location evidence="2">Nucleus</location>
    </subcellularLocation>
    <subcellularLocation>
        <location evidence="2">Lysosome</location>
    </subcellularLocation>
</comment>
<comment type="similarity">
    <text evidence="3">Belongs to the GTR/RAG GTP-binding protein family.</text>
</comment>
<accession>Q54IK1</accession>
<protein>
    <recommendedName>
        <fullName evidence="3">Ras-related GTP-binding protein A</fullName>
    </recommendedName>
</protein>